<reference key="1">
    <citation type="journal article" date="2004" name="Nucleic Acids Res.">
        <title>Unique features revealed by the genome sequence of Acinetobacter sp. ADP1, a versatile and naturally transformation competent bacterium.</title>
        <authorList>
            <person name="Barbe V."/>
            <person name="Vallenet D."/>
            <person name="Fonknechten N."/>
            <person name="Kreimeyer A."/>
            <person name="Oztas S."/>
            <person name="Labarre L."/>
            <person name="Cruveiller S."/>
            <person name="Robert C."/>
            <person name="Duprat S."/>
            <person name="Wincker P."/>
            <person name="Ornston L.N."/>
            <person name="Weissenbach J."/>
            <person name="Marliere P."/>
            <person name="Cohen G.N."/>
            <person name="Medigue C."/>
        </authorList>
    </citation>
    <scope>NUCLEOTIDE SEQUENCE [LARGE SCALE GENOMIC DNA]</scope>
    <source>
        <strain>ATCC 33305 / BD413 / ADP1</strain>
    </source>
</reference>
<gene>
    <name evidence="1" type="primary">rpsF</name>
    <name type="ordered locus">ACIAD2430</name>
</gene>
<comment type="function">
    <text evidence="1">Binds together with bS18 to 16S ribosomal RNA.</text>
</comment>
<comment type="similarity">
    <text evidence="1">Belongs to the bacterial ribosomal protein bS6 family.</text>
</comment>
<proteinExistence type="inferred from homology"/>
<accession>Q6F9R0</accession>
<protein>
    <recommendedName>
        <fullName evidence="1">Small ribosomal subunit protein bS6</fullName>
    </recommendedName>
    <alternativeName>
        <fullName evidence="2">30S ribosomal protein S6</fullName>
    </alternativeName>
</protein>
<dbReference type="EMBL" id="CR543861">
    <property type="protein sequence ID" value="CAG69203.1"/>
    <property type="molecule type" value="Genomic_DNA"/>
</dbReference>
<dbReference type="RefSeq" id="WP_004928369.1">
    <property type="nucleotide sequence ID" value="NC_005966.1"/>
</dbReference>
<dbReference type="SMR" id="Q6F9R0"/>
<dbReference type="STRING" id="202950.GCA_001485005_01563"/>
<dbReference type="GeneID" id="45234739"/>
<dbReference type="KEGG" id="aci:ACIAD2430"/>
<dbReference type="eggNOG" id="COG0360">
    <property type="taxonomic scope" value="Bacteria"/>
</dbReference>
<dbReference type="HOGENOM" id="CLU_113441_6_1_6"/>
<dbReference type="OrthoDB" id="9812702at2"/>
<dbReference type="BioCyc" id="ASP62977:ACIAD_RS11110-MONOMER"/>
<dbReference type="Proteomes" id="UP000000430">
    <property type="component" value="Chromosome"/>
</dbReference>
<dbReference type="GO" id="GO:0022627">
    <property type="term" value="C:cytosolic small ribosomal subunit"/>
    <property type="evidence" value="ECO:0007669"/>
    <property type="project" value="TreeGrafter"/>
</dbReference>
<dbReference type="GO" id="GO:0070181">
    <property type="term" value="F:small ribosomal subunit rRNA binding"/>
    <property type="evidence" value="ECO:0007669"/>
    <property type="project" value="TreeGrafter"/>
</dbReference>
<dbReference type="GO" id="GO:0003735">
    <property type="term" value="F:structural constituent of ribosome"/>
    <property type="evidence" value="ECO:0007669"/>
    <property type="project" value="InterPro"/>
</dbReference>
<dbReference type="GO" id="GO:0006412">
    <property type="term" value="P:translation"/>
    <property type="evidence" value="ECO:0007669"/>
    <property type="project" value="UniProtKB-UniRule"/>
</dbReference>
<dbReference type="CDD" id="cd00473">
    <property type="entry name" value="bS6"/>
    <property type="match status" value="1"/>
</dbReference>
<dbReference type="FunFam" id="3.30.70.60:FF:000003">
    <property type="entry name" value="30S ribosomal protein S6"/>
    <property type="match status" value="1"/>
</dbReference>
<dbReference type="Gene3D" id="3.30.70.60">
    <property type="match status" value="1"/>
</dbReference>
<dbReference type="HAMAP" id="MF_00360">
    <property type="entry name" value="Ribosomal_bS6"/>
    <property type="match status" value="1"/>
</dbReference>
<dbReference type="InterPro" id="IPR000529">
    <property type="entry name" value="Ribosomal_bS6"/>
</dbReference>
<dbReference type="InterPro" id="IPR020815">
    <property type="entry name" value="Ribosomal_bS6_CS"/>
</dbReference>
<dbReference type="InterPro" id="IPR035980">
    <property type="entry name" value="Ribosomal_bS6_sf"/>
</dbReference>
<dbReference type="InterPro" id="IPR020814">
    <property type="entry name" value="Ribosomal_S6_plastid/chlpt"/>
</dbReference>
<dbReference type="InterPro" id="IPR014717">
    <property type="entry name" value="Transl_elong_EF1B/ribsomal_bS6"/>
</dbReference>
<dbReference type="NCBIfam" id="TIGR00166">
    <property type="entry name" value="S6"/>
    <property type="match status" value="1"/>
</dbReference>
<dbReference type="PANTHER" id="PTHR21011">
    <property type="entry name" value="MITOCHONDRIAL 28S RIBOSOMAL PROTEIN S6"/>
    <property type="match status" value="1"/>
</dbReference>
<dbReference type="PANTHER" id="PTHR21011:SF1">
    <property type="entry name" value="SMALL RIBOSOMAL SUBUNIT PROTEIN BS6M"/>
    <property type="match status" value="1"/>
</dbReference>
<dbReference type="Pfam" id="PF01250">
    <property type="entry name" value="Ribosomal_S6"/>
    <property type="match status" value="1"/>
</dbReference>
<dbReference type="SUPFAM" id="SSF54995">
    <property type="entry name" value="Ribosomal protein S6"/>
    <property type="match status" value="1"/>
</dbReference>
<dbReference type="PROSITE" id="PS01048">
    <property type="entry name" value="RIBOSOMAL_S6"/>
    <property type="match status" value="1"/>
</dbReference>
<name>RS6_ACIAD</name>
<keyword id="KW-0687">Ribonucleoprotein</keyword>
<keyword id="KW-0689">Ribosomal protein</keyword>
<keyword id="KW-0694">RNA-binding</keyword>
<keyword id="KW-0699">rRNA-binding</keyword>
<evidence type="ECO:0000255" key="1">
    <source>
        <dbReference type="HAMAP-Rule" id="MF_00360"/>
    </source>
</evidence>
<evidence type="ECO:0000305" key="2"/>
<sequence length="128" mass="15064">MRHYEIVLLVHPDQSDQVVGMVERYISQIKEADGQIHRLEDWGRRQLAYPINKIHKAHYILMNVECGQTTLDELEELFRYNDAIIRNIIIRREHAITEESLLAKSAEEKRARKAQREEAQQIQDSAEA</sequence>
<feature type="chain" id="PRO_0000176713" description="Small ribosomal subunit protein bS6">
    <location>
        <begin position="1"/>
        <end position="128"/>
    </location>
</feature>
<organism>
    <name type="scientific">Acinetobacter baylyi (strain ATCC 33305 / BD413 / ADP1)</name>
    <dbReference type="NCBI Taxonomy" id="62977"/>
    <lineage>
        <taxon>Bacteria</taxon>
        <taxon>Pseudomonadati</taxon>
        <taxon>Pseudomonadota</taxon>
        <taxon>Gammaproteobacteria</taxon>
        <taxon>Moraxellales</taxon>
        <taxon>Moraxellaceae</taxon>
        <taxon>Acinetobacter</taxon>
    </lineage>
</organism>